<proteinExistence type="evidence at protein level"/>
<keyword id="KW-0007">Acetylation</keyword>
<keyword id="KW-0010">Activator</keyword>
<keyword id="KW-0090">Biological rhythms</keyword>
<keyword id="KW-0966">Cell projection</keyword>
<keyword id="KW-0963">Cytoplasm</keyword>
<keyword id="KW-0221">Differentiation</keyword>
<keyword id="KW-0238">DNA-binding</keyword>
<keyword id="KW-0349">Heme</keyword>
<keyword id="KW-0408">Iron</keyword>
<keyword id="KW-0479">Metal-binding</keyword>
<keyword id="KW-0539">Nucleus</keyword>
<keyword id="KW-0597">Phosphoprotein</keyword>
<keyword id="KW-0675">Receptor</keyword>
<keyword id="KW-1185">Reference proteome</keyword>
<keyword id="KW-0678">Repressor</keyword>
<keyword id="KW-0770">Synapse</keyword>
<keyword id="KW-0804">Transcription</keyword>
<keyword id="KW-0805">Transcription regulation</keyword>
<keyword id="KW-0832">Ubl conjugation</keyword>
<keyword id="KW-0862">Zinc</keyword>
<keyword id="KW-0863">Zinc-finger</keyword>
<sequence length="615" mass="66693">MTTLDSNNNTGGVITYIGSSGSSPSRTSPESLYSDSSNGSFQSLTQGCPTYFPPSPTGSLTQDPARSFGTVPPSLSDDSSPSSASSSSSSSSSSFYNGSPPGSLQVAMEDSSRVSPSKGTSNITKLNGMVLLCKVCGDVASGFHYGVHACEGCKGFFRRSIQQNIQYKRCLKNENCSIVRINRNRCQQCRFKKCLSVGMSRDAVRFGRIPKREKQRMLAEMQNAMNLANNQLSSLCPLETSPAPHPTSGSVGPSPPPAPAPTPLVGFSQFPQQLTPPRSPSPEPTVEDVISQVARAHREIFTYAHDKLGTSPGNFNANHASGSPPATTPQCWESQGCPSTPNDNNLLAAQRHNEALNGLRQGPSSYPPTWPSGPAHHSCHQPNSNGHRLCPTHVYSAPEGKAPANGLRQGNTKNVLLACPMNMYPHGRSGRTVQEIWEDFSMSFTPAVREVVEFAKHIPGFRDLSQHDQVTLLKAGTFEVLMVRFASLFNVKDQTVMFLSRTTYSLQELGAMGMGDLLNAMFDFSEKLNSLALTEEELGLFTAVVLVSADRSGMENSASVEQLQKTLLRALRALVLKNRPSETSRFTKLLLKLPDLRTLNNMHSEKLLSFRVDAQ</sequence>
<organism>
    <name type="scientific">Rattus norvegicus</name>
    <name type="common">Rat</name>
    <dbReference type="NCBI Taxonomy" id="10116"/>
    <lineage>
        <taxon>Eukaryota</taxon>
        <taxon>Metazoa</taxon>
        <taxon>Chordata</taxon>
        <taxon>Craniata</taxon>
        <taxon>Vertebrata</taxon>
        <taxon>Euteleostomi</taxon>
        <taxon>Mammalia</taxon>
        <taxon>Eutheria</taxon>
        <taxon>Euarchontoglires</taxon>
        <taxon>Glires</taxon>
        <taxon>Rodentia</taxon>
        <taxon>Myomorpha</taxon>
        <taxon>Muroidea</taxon>
        <taxon>Muridae</taxon>
        <taxon>Murinae</taxon>
        <taxon>Rattus</taxon>
    </lineage>
</organism>
<name>NR1D1_RAT</name>
<evidence type="ECO:0000250" key="1"/>
<evidence type="ECO:0000250" key="2">
    <source>
        <dbReference type="UniProtKB" id="P20393"/>
    </source>
</evidence>
<evidence type="ECO:0000250" key="3">
    <source>
        <dbReference type="UniProtKB" id="Q3UV55"/>
    </source>
</evidence>
<evidence type="ECO:0000255" key="4">
    <source>
        <dbReference type="PROSITE-ProRule" id="PRU00407"/>
    </source>
</evidence>
<evidence type="ECO:0000255" key="5">
    <source>
        <dbReference type="PROSITE-ProRule" id="PRU01189"/>
    </source>
</evidence>
<evidence type="ECO:0000256" key="6">
    <source>
        <dbReference type="SAM" id="MobiDB-lite"/>
    </source>
</evidence>
<evidence type="ECO:0000269" key="7">
    <source>
    </source>
</evidence>
<evidence type="ECO:0000269" key="8">
    <source>
    </source>
</evidence>
<evidence type="ECO:0000269" key="9">
    <source>
    </source>
</evidence>
<evidence type="ECO:0000305" key="10"/>
<gene>
    <name type="primary">Nr1d1</name>
</gene>
<protein>
    <recommendedName>
        <fullName>Nuclear receptor subfamily 1 group D member 1</fullName>
    </recommendedName>
    <alternativeName>
        <fullName>Rev-erbA-alpha</fullName>
    </alternativeName>
    <alternativeName>
        <fullName>V-erbA-related protein 1</fullName>
        <shortName>EAR-1</shortName>
    </alternativeName>
</protein>
<comment type="function">
    <text evidence="3 8">Transcriptional repressor which coordinates circadian rhythm and metabolic pathways in a heme-dependent manner. Integral component of the complex transcription machinery that governs circadian rhythmicity and forms a critical negative limb of the circadian clock by directly repressing the expression of core clock components BMAL1, CLOCK and CRY1. Also regulates genes involved in metabolic functions, including lipid and bile acid metabolism, adipogenesis, gluconeogenesis and the macrophage inflammatory response. Acts as a receptor for heme which stimulates its interaction with the NCOR1/HDAC3 corepressor complex, enhancing transcriptional repression. Recognizes two classes of DNA response elements within the promoter of its target genes and can bind to DNA as either monomers or homodimers, depending on the nature of the response element. Binds as a monomer to a response element composed of the consensus half-site motif 5'-[A/G]GGTCA-3' preceded by an A/T-rich 5' sequence (RevRE), or as a homodimer to a direct repeat of the core motif spaced by two nucleotides (RevDR-2). Acts as a potent competitive repressor of ROR alpha (RORA) function and regulates the levels of its ligand heme by repressing the expression of PPARGC1A, a potent inducer of heme synthesis. Regulates lipid metabolism by repressing the expression of APOC3 and by influencing the activity of sterol response element binding proteins (SREBPs); represses INSIG2 which interferes with the proteolytic activation of SREBPs which in turn govern the rhythmic expression of enzymes with key functions in sterol and fatty acid synthesis. Regulates gluconeogenesis via repression of G6PC1 and PEPCK and adipocyte differentiation via repression of PPARG. Regulates glucagon release in pancreatic alpha-cells via the AMPK-NAMPT-SIRT1 pathway and the proliferation, glucose-induced insulin secretion and expression of key lipogenic genes in pancreatic-beta cells. Positively regulates bile acid synthesis by increasing hepatic expression of CYP7A1 via repression of NR0B2 and NFIL3 which are negative regulators of CYP7A1. Modulates skeletal muscle oxidative capacity by regulating mitochondrial biogenesis and autophagy; controls mitochondrial biogenesis and respiration by interfering with the STK11-PRKAA1/2-SIRT1-PPARGC1A signaling pathway. Represses the expression of SERPINE1/PAI1, an important modulator of cardiovascular disease and the expression of inflammatory cytokines and chemokines in macrophages. Represses gene expression at a distance in macrophages by inhibiting the transcription of enhancer-derived RNAs (eRNAs). Plays a role in the circadian regulation of body temperature and negatively regulates thermogenic transcriptional programs in brown adipose tissue (BAT); imposes a circadian oscillation in BAT activity, increasing body temperature when awake and depressing thermogenesis during sleep. In concert with NR2E3, regulates transcriptional networks critical for photoreceptor development and function. In addition to its activity as a repressor, can also act as a transcriptional activator (By similarity). In the ovarian granulosa cells acts as a transcriptional activator of STAR which plays a role in steroid biosynthesis (PubMed:22425774). In collaboration with SP1, activates GJA1 transcription in a heme-independent manner (By similarity). Represses the transcription of CYP2B10, CYP4A10 and CYP4A14 (By similarity). Represses the transcription of CES2 (By similarity). Represses and regulates the circadian expression of TSHB in a NCOR1-dependent manner (By similarity). Negatively regulates the protein stability of NR3C1 and influences the time-dependent subcellular distribution of NR3C1, thereby affecting its transcriptional regulatory activity (By similarity). Plays a critical role in the circadian control of neutrophilic inflammation in the lung; under resting, non-stress conditions, acts as a rhythmic repressor to limit inflammatory activity whereas in the presence of inflammatory triggers undergoes ubiquitin-mediated degradation thereby relieving inhibition of the inflammatory response (By similarity). Plays a key role in the circadian regulation of microglial activation and neuroinflammation; suppresses microglial activation through the NF-kappaB pathway in the central nervous system (By similarity). Plays a role in the regulation of the diurnal rhythms of lipid and protein metabolism in the skeletal muscle via transcriptional repression of genes controlling lipid and amino acid metabolism in the muscle (By similarity).</text>
</comment>
<comment type="subunit">
    <text evidence="2 3 7">Binds DNA as a monomer or a homodimer (By similarity). Interacts with C1D, NR2E3, SP1 and ZNHIT1 (By similarity). Interacts with OPHN1 (via C-terminus) (PubMed:21874017). Interacts with PER2; the interaction associates PER2 to BMAL1 promoter region (By similarity). Interacts with CRY1 (By similarity). Interacts with CCAR2 (By similarity). Interacts with SIAH2 (By similarity). Interacts with FBXW7 and CDK1 (By similarity). Interacts with HUWE1 (By similarity). Interacts with NR0B2 (By similarity). Interacts with NFIL3 (By similarity). Interacts (via domain NR LBD) with HSP90AA1 and HSP90AB1 (By similarity).</text>
</comment>
<comment type="subcellular location">
    <subcellularLocation>
        <location evidence="4">Nucleus</location>
    </subcellularLocation>
    <subcellularLocation>
        <location evidence="3">Cytoplasm</location>
    </subcellularLocation>
    <subcellularLocation>
        <location evidence="3">Cell projection</location>
        <location evidence="3">Dendrite</location>
    </subcellularLocation>
    <subcellularLocation>
        <location evidence="3">Cell projection</location>
        <location evidence="3">Dendritic spine</location>
    </subcellularLocation>
    <text evidence="3">Localizes to the cytoplasm, dendrites and dendritic spine in the presence of OPHN1. Localizes predominantly to the nucleus at ZT8 whereas it is cytoplasmic at ZT20. Phosphorylation by CSNK1E enhances its cytoplasmic localization.</text>
</comment>
<comment type="induction">
    <text evidence="9">In bladder smooth muscle cells, exhibits night/day variations with a peak time at circadian time (CT) 4-12 and a trough at CT16-24.</text>
</comment>
<comment type="domain">
    <text>Composed of three domains: a modulating N-terminal domain, a DNA-binding domain and a C-terminal ligand-binding domain.</text>
</comment>
<comment type="PTM">
    <text evidence="2 3">Ubiquitinated, leading to its proteasomal degradation (By similarity). Ubiquitinated by the SCF(FBXW7) complex when phosphorylated by CDK1 leading to its proteasomal degradation (By similarity). Ubiquitinated by SIAH2; leading to its proteasomal degradation (By similarity). Rapidly ubiquitinated in response to inflammatory triggers and sumoylation is a prerequisite to its ubiquitination (By similarity).</text>
</comment>
<comment type="PTM">
    <text evidence="3">Sumoylated by UBE2I, desumoylated by SENP1, and sumoylation is a prerequisite to its ubiquitination.</text>
</comment>
<comment type="PTM">
    <text evidence="3">Phosphorylated by CSNK1E; phosphorylation enhances its cytoplasmic localization.</text>
</comment>
<comment type="PTM">
    <text evidence="3">Undergoes lysosome-mediated degradation in a time-dependent manner in the liver.</text>
</comment>
<comment type="similarity">
    <text evidence="10">Belongs to the nuclear hormone receptor family. NR1 subfamily.</text>
</comment>
<comment type="sequence caution" evidence="10">
    <conflict type="erroneous initiation">
        <sequence resource="EMBL-CDS" id="AAA74939"/>
    </conflict>
    <text>Truncated N-terminus.</text>
</comment>
<dbReference type="EMBL" id="BC062047">
    <property type="protein sequence ID" value="AAH62047.1"/>
    <property type="molecule type" value="mRNA"/>
</dbReference>
<dbReference type="EMBL" id="M25804">
    <property type="protein sequence ID" value="AAA74939.1"/>
    <property type="status" value="ALT_INIT"/>
    <property type="molecule type" value="mRNA"/>
</dbReference>
<dbReference type="PIR" id="A30226">
    <property type="entry name" value="A30226"/>
</dbReference>
<dbReference type="RefSeq" id="NP_001106893.1">
    <property type="nucleotide sequence ID" value="NM_001113422.1"/>
</dbReference>
<dbReference type="RefSeq" id="NP_665718.2">
    <property type="nucleotide sequence ID" value="NM_145775.2"/>
</dbReference>
<dbReference type="SMR" id="Q63503"/>
<dbReference type="FunCoup" id="Q63503">
    <property type="interactions" value="51"/>
</dbReference>
<dbReference type="IntAct" id="Q63503">
    <property type="interactions" value="1"/>
</dbReference>
<dbReference type="STRING" id="10116.ENSRNOP00000012537"/>
<dbReference type="GlyGen" id="Q63503">
    <property type="glycosylation" value="2 sites"/>
</dbReference>
<dbReference type="iPTMnet" id="Q63503"/>
<dbReference type="PhosphoSitePlus" id="Q63503"/>
<dbReference type="PaxDb" id="10116-ENSRNOP00000012537"/>
<dbReference type="GeneID" id="252917"/>
<dbReference type="KEGG" id="rno:252917"/>
<dbReference type="UCSC" id="RGD:628827">
    <property type="organism name" value="rat"/>
</dbReference>
<dbReference type="AGR" id="RGD:628827"/>
<dbReference type="CTD" id="9572"/>
<dbReference type="RGD" id="628827">
    <property type="gene designation" value="Nr1d1"/>
</dbReference>
<dbReference type="eggNOG" id="KOG4846">
    <property type="taxonomic scope" value="Eukaryota"/>
</dbReference>
<dbReference type="InParanoid" id="Q63503"/>
<dbReference type="PhylomeDB" id="Q63503"/>
<dbReference type="Reactome" id="R-RNO-383280">
    <property type="pathway name" value="Nuclear Receptor transcription pathway"/>
</dbReference>
<dbReference type="PRO" id="PR:Q63503"/>
<dbReference type="Proteomes" id="UP000002494">
    <property type="component" value="Unplaced"/>
</dbReference>
<dbReference type="GO" id="GO:0000785">
    <property type="term" value="C:chromatin"/>
    <property type="evidence" value="ECO:0000266"/>
    <property type="project" value="RGD"/>
</dbReference>
<dbReference type="GO" id="GO:0005737">
    <property type="term" value="C:cytoplasm"/>
    <property type="evidence" value="ECO:0000250"/>
    <property type="project" value="UniProtKB"/>
</dbReference>
<dbReference type="GO" id="GO:0030425">
    <property type="term" value="C:dendrite"/>
    <property type="evidence" value="ECO:0000314"/>
    <property type="project" value="RGD"/>
</dbReference>
<dbReference type="GO" id="GO:0043197">
    <property type="term" value="C:dendritic spine"/>
    <property type="evidence" value="ECO:0000250"/>
    <property type="project" value="UniProtKB"/>
</dbReference>
<dbReference type="GO" id="GO:0043025">
    <property type="term" value="C:neuronal cell body"/>
    <property type="evidence" value="ECO:0000314"/>
    <property type="project" value="RGD"/>
</dbReference>
<dbReference type="GO" id="GO:0005634">
    <property type="term" value="C:nucleus"/>
    <property type="evidence" value="ECO:0000250"/>
    <property type="project" value="UniProtKB"/>
</dbReference>
<dbReference type="GO" id="GO:0003677">
    <property type="term" value="F:DNA binding"/>
    <property type="evidence" value="ECO:0000266"/>
    <property type="project" value="RGD"/>
</dbReference>
<dbReference type="GO" id="GO:0003700">
    <property type="term" value="F:DNA-binding transcription factor activity"/>
    <property type="evidence" value="ECO:0000266"/>
    <property type="project" value="RGD"/>
</dbReference>
<dbReference type="GO" id="GO:0001227">
    <property type="term" value="F:DNA-binding transcription repressor activity, RNA polymerase II-specific"/>
    <property type="evidence" value="ECO:0000266"/>
    <property type="project" value="RGD"/>
</dbReference>
<dbReference type="GO" id="GO:0070888">
    <property type="term" value="F:E-box binding"/>
    <property type="evidence" value="ECO:0000250"/>
    <property type="project" value="UniProtKB"/>
</dbReference>
<dbReference type="GO" id="GO:0020037">
    <property type="term" value="F:heme binding"/>
    <property type="evidence" value="ECO:0000266"/>
    <property type="project" value="RGD"/>
</dbReference>
<dbReference type="GO" id="GO:0004879">
    <property type="term" value="F:nuclear receptor activity"/>
    <property type="evidence" value="ECO:0000318"/>
    <property type="project" value="GO_Central"/>
</dbReference>
<dbReference type="GO" id="GO:0000978">
    <property type="term" value="F:RNA polymerase II cis-regulatory region sequence-specific DNA binding"/>
    <property type="evidence" value="ECO:0000266"/>
    <property type="project" value="RGD"/>
</dbReference>
<dbReference type="GO" id="GO:0000977">
    <property type="term" value="F:RNA polymerase II transcription regulatory region sequence-specific DNA binding"/>
    <property type="evidence" value="ECO:0000266"/>
    <property type="project" value="RGD"/>
</dbReference>
<dbReference type="GO" id="GO:1990837">
    <property type="term" value="F:sequence-specific double-stranded DNA binding"/>
    <property type="evidence" value="ECO:0000314"/>
    <property type="project" value="RGD"/>
</dbReference>
<dbReference type="GO" id="GO:0000976">
    <property type="term" value="F:transcription cis-regulatory region binding"/>
    <property type="evidence" value="ECO:0000314"/>
    <property type="project" value="RGD"/>
</dbReference>
<dbReference type="GO" id="GO:0001222">
    <property type="term" value="F:transcription corepressor binding"/>
    <property type="evidence" value="ECO:0000250"/>
    <property type="project" value="UniProtKB"/>
</dbReference>
<dbReference type="GO" id="GO:0008270">
    <property type="term" value="F:zinc ion binding"/>
    <property type="evidence" value="ECO:0007669"/>
    <property type="project" value="UniProtKB-KW"/>
</dbReference>
<dbReference type="GO" id="GO:0030154">
    <property type="term" value="P:cell differentiation"/>
    <property type="evidence" value="ECO:0000318"/>
    <property type="project" value="GO_Central"/>
</dbReference>
<dbReference type="GO" id="GO:0071347">
    <property type="term" value="P:cellular response to interleukin-1"/>
    <property type="evidence" value="ECO:0000250"/>
    <property type="project" value="UniProtKB"/>
</dbReference>
<dbReference type="GO" id="GO:0071222">
    <property type="term" value="P:cellular response to lipopolysaccharide"/>
    <property type="evidence" value="ECO:0000266"/>
    <property type="project" value="RGD"/>
</dbReference>
<dbReference type="GO" id="GO:0071356">
    <property type="term" value="P:cellular response to tumor necrosis factor"/>
    <property type="evidence" value="ECO:0000250"/>
    <property type="project" value="UniProtKB"/>
</dbReference>
<dbReference type="GO" id="GO:0042632">
    <property type="term" value="P:cholesterol homeostasis"/>
    <property type="evidence" value="ECO:0000250"/>
    <property type="project" value="UniProtKB"/>
</dbReference>
<dbReference type="GO" id="GO:0032922">
    <property type="term" value="P:circadian regulation of gene expression"/>
    <property type="evidence" value="ECO:0000250"/>
    <property type="project" value="UniProtKB"/>
</dbReference>
<dbReference type="GO" id="GO:0007623">
    <property type="term" value="P:circadian rhythm"/>
    <property type="evidence" value="ECO:0000270"/>
    <property type="project" value="RGD"/>
</dbReference>
<dbReference type="GO" id="GO:0060086">
    <property type="term" value="P:circadian temperature homeostasis"/>
    <property type="evidence" value="ECO:0000250"/>
    <property type="project" value="UniProtKB"/>
</dbReference>
<dbReference type="GO" id="GO:0005978">
    <property type="term" value="P:glycogen biosynthetic process"/>
    <property type="evidence" value="ECO:0000250"/>
    <property type="project" value="UniProtKB"/>
</dbReference>
<dbReference type="GO" id="GO:0009755">
    <property type="term" value="P:hormone-mediated signaling pathway"/>
    <property type="evidence" value="ECO:0000318"/>
    <property type="project" value="GO_Central"/>
</dbReference>
<dbReference type="GO" id="GO:0001678">
    <property type="term" value="P:intracellular glucose homeostasis"/>
    <property type="evidence" value="ECO:0000250"/>
    <property type="project" value="UniProtKB"/>
</dbReference>
<dbReference type="GO" id="GO:0030522">
    <property type="term" value="P:intracellular receptor signaling pathway"/>
    <property type="evidence" value="ECO:0000318"/>
    <property type="project" value="GO_Central"/>
</dbReference>
<dbReference type="GO" id="GO:0061889">
    <property type="term" value="P:negative regulation of astrocyte activation"/>
    <property type="evidence" value="ECO:0000250"/>
    <property type="project" value="UniProtKB"/>
</dbReference>
<dbReference type="GO" id="GO:0043124">
    <property type="term" value="P:negative regulation of canonical NF-kappaB signal transduction"/>
    <property type="evidence" value="ECO:0000250"/>
    <property type="project" value="UniProtKB"/>
</dbReference>
<dbReference type="GO" id="GO:0120163">
    <property type="term" value="P:negative regulation of cold-induced thermogenesis"/>
    <property type="evidence" value="ECO:0000250"/>
    <property type="project" value="YuBioLab"/>
</dbReference>
<dbReference type="GO" id="GO:0045892">
    <property type="term" value="P:negative regulation of DNA-templated transcription"/>
    <property type="evidence" value="ECO:0000250"/>
    <property type="project" value="UniProtKB"/>
</dbReference>
<dbReference type="GO" id="GO:0050728">
    <property type="term" value="P:negative regulation of inflammatory response"/>
    <property type="evidence" value="ECO:0000250"/>
    <property type="project" value="UniProtKB"/>
</dbReference>
<dbReference type="GO" id="GO:1903979">
    <property type="term" value="P:negative regulation of microglial cell activation"/>
    <property type="evidence" value="ECO:0000250"/>
    <property type="project" value="UniProtKB"/>
</dbReference>
<dbReference type="GO" id="GO:0150079">
    <property type="term" value="P:negative regulation of neuroinflammatory response"/>
    <property type="evidence" value="ECO:0000250"/>
    <property type="project" value="UniProtKB"/>
</dbReference>
<dbReference type="GO" id="GO:0034144">
    <property type="term" value="P:negative regulation of toll-like receptor 4 signaling pathway"/>
    <property type="evidence" value="ECO:0000266"/>
    <property type="project" value="RGD"/>
</dbReference>
<dbReference type="GO" id="GO:0000122">
    <property type="term" value="P:negative regulation of transcription by RNA polymerase II"/>
    <property type="evidence" value="ECO:0000266"/>
    <property type="project" value="RGD"/>
</dbReference>
<dbReference type="GO" id="GO:0009648">
    <property type="term" value="P:photoperiodism"/>
    <property type="evidence" value="ECO:0000270"/>
    <property type="project" value="RGD"/>
</dbReference>
<dbReference type="GO" id="GO:0070859">
    <property type="term" value="P:positive regulation of bile acid biosynthetic process"/>
    <property type="evidence" value="ECO:0000250"/>
    <property type="project" value="UniProtKB"/>
</dbReference>
<dbReference type="GO" id="GO:0042753">
    <property type="term" value="P:positive regulation of circadian rhythm"/>
    <property type="evidence" value="ECO:0000314"/>
    <property type="project" value="RGD"/>
</dbReference>
<dbReference type="GO" id="GO:0045893">
    <property type="term" value="P:positive regulation of DNA-templated transcription"/>
    <property type="evidence" value="ECO:0000314"/>
    <property type="project" value="UniProtKB"/>
</dbReference>
<dbReference type="GO" id="GO:0045944">
    <property type="term" value="P:positive regulation of transcription by RNA polymerase II"/>
    <property type="evidence" value="ECO:0000318"/>
    <property type="project" value="GO_Central"/>
</dbReference>
<dbReference type="GO" id="GO:0010498">
    <property type="term" value="P:proteasomal protein catabolic process"/>
    <property type="evidence" value="ECO:0000250"/>
    <property type="project" value="UniProtKB"/>
</dbReference>
<dbReference type="GO" id="GO:0031648">
    <property type="term" value="P:protein destabilization"/>
    <property type="evidence" value="ECO:0000250"/>
    <property type="project" value="UniProtKB"/>
</dbReference>
<dbReference type="GO" id="GO:0042752">
    <property type="term" value="P:regulation of circadian rhythm"/>
    <property type="evidence" value="ECO:0000314"/>
    <property type="project" value="UniProtKB"/>
</dbReference>
<dbReference type="GO" id="GO:0042749">
    <property type="term" value="P:regulation of circadian sleep/wake cycle"/>
    <property type="evidence" value="ECO:0000250"/>
    <property type="project" value="UniProtKB"/>
</dbReference>
<dbReference type="GO" id="GO:0006355">
    <property type="term" value="P:regulation of DNA-templated transcription"/>
    <property type="evidence" value="ECO:0000266"/>
    <property type="project" value="RGD"/>
</dbReference>
<dbReference type="GO" id="GO:0045598">
    <property type="term" value="P:regulation of fat cell differentiation"/>
    <property type="evidence" value="ECO:0000250"/>
    <property type="project" value="UniProtKB"/>
</dbReference>
<dbReference type="GO" id="GO:2000489">
    <property type="term" value="P:regulation of hepatic stellate cell activation"/>
    <property type="evidence" value="ECO:0000314"/>
    <property type="project" value="RGD"/>
</dbReference>
<dbReference type="GO" id="GO:0061178">
    <property type="term" value="P:regulation of insulin secretion involved in cellular response to glucose stimulus"/>
    <property type="evidence" value="ECO:0000250"/>
    <property type="project" value="UniProtKB"/>
</dbReference>
<dbReference type="GO" id="GO:0019216">
    <property type="term" value="P:regulation of lipid metabolic process"/>
    <property type="evidence" value="ECO:0000250"/>
    <property type="project" value="UniProtKB"/>
</dbReference>
<dbReference type="GO" id="GO:0061469">
    <property type="term" value="P:regulation of type B pancreatic cell proliferation"/>
    <property type="evidence" value="ECO:0000250"/>
    <property type="project" value="UniProtKB"/>
</dbReference>
<dbReference type="GO" id="GO:0044321">
    <property type="term" value="P:response to leptin"/>
    <property type="evidence" value="ECO:0000250"/>
    <property type="project" value="UniProtKB"/>
</dbReference>
<dbReference type="CDD" id="cd07166">
    <property type="entry name" value="NR_DBD_REV_ERB"/>
    <property type="match status" value="1"/>
</dbReference>
<dbReference type="FunFam" id="3.30.50.10:FF:000013">
    <property type="entry name" value="Nuclear receptor subfamily 1 group D member 2"/>
    <property type="match status" value="1"/>
</dbReference>
<dbReference type="Gene3D" id="3.30.50.10">
    <property type="entry name" value="Erythroid Transcription Factor GATA-1, subunit A"/>
    <property type="match status" value="1"/>
</dbReference>
<dbReference type="Gene3D" id="1.10.565.10">
    <property type="entry name" value="Retinoid X Receptor"/>
    <property type="match status" value="1"/>
</dbReference>
<dbReference type="InterPro" id="IPR035500">
    <property type="entry name" value="NHR-like_dom_sf"/>
</dbReference>
<dbReference type="InterPro" id="IPR000536">
    <property type="entry name" value="Nucl_hrmn_rcpt_lig-bd"/>
</dbReference>
<dbReference type="InterPro" id="IPR050234">
    <property type="entry name" value="Nuclear_hormone_rcpt_NR1"/>
</dbReference>
<dbReference type="InterPro" id="IPR001723">
    <property type="entry name" value="Nuclear_hrmn_rcpt"/>
</dbReference>
<dbReference type="InterPro" id="IPR001628">
    <property type="entry name" value="Znf_hrmn_rcpt"/>
</dbReference>
<dbReference type="InterPro" id="IPR013088">
    <property type="entry name" value="Znf_NHR/GATA"/>
</dbReference>
<dbReference type="PANTHER" id="PTHR24082">
    <property type="entry name" value="NUCLEAR HORMONE RECEPTOR"/>
    <property type="match status" value="1"/>
</dbReference>
<dbReference type="PANTHER" id="PTHR24082:SF113">
    <property type="entry name" value="NUCLEAR RECEPTOR SUBFAMILY 1 GROUP D MEMBER 1"/>
    <property type="match status" value="1"/>
</dbReference>
<dbReference type="Pfam" id="PF00104">
    <property type="entry name" value="Hormone_recep"/>
    <property type="match status" value="1"/>
</dbReference>
<dbReference type="Pfam" id="PF00105">
    <property type="entry name" value="zf-C4"/>
    <property type="match status" value="1"/>
</dbReference>
<dbReference type="PRINTS" id="PR00398">
    <property type="entry name" value="STRDHORMONER"/>
</dbReference>
<dbReference type="PRINTS" id="PR00047">
    <property type="entry name" value="STROIDFINGER"/>
</dbReference>
<dbReference type="SMART" id="SM00430">
    <property type="entry name" value="HOLI"/>
    <property type="match status" value="1"/>
</dbReference>
<dbReference type="SMART" id="SM00399">
    <property type="entry name" value="ZnF_C4"/>
    <property type="match status" value="1"/>
</dbReference>
<dbReference type="SUPFAM" id="SSF57716">
    <property type="entry name" value="Glucocorticoid receptor-like (DNA-binding domain)"/>
    <property type="match status" value="1"/>
</dbReference>
<dbReference type="SUPFAM" id="SSF48508">
    <property type="entry name" value="Nuclear receptor ligand-binding domain"/>
    <property type="match status" value="1"/>
</dbReference>
<dbReference type="PROSITE" id="PS51843">
    <property type="entry name" value="NR_LBD"/>
    <property type="match status" value="1"/>
</dbReference>
<dbReference type="PROSITE" id="PS00031">
    <property type="entry name" value="NUCLEAR_REC_DBD_1"/>
    <property type="match status" value="1"/>
</dbReference>
<dbReference type="PROSITE" id="PS51030">
    <property type="entry name" value="NUCLEAR_REC_DBD_2"/>
    <property type="match status" value="1"/>
</dbReference>
<reference key="1">
    <citation type="journal article" date="2004" name="Genome Res.">
        <title>The status, quality, and expansion of the NIH full-length cDNA project: the Mammalian Gene Collection (MGC).</title>
        <authorList>
            <consortium name="The MGC Project Team"/>
        </authorList>
    </citation>
    <scope>NUCLEOTIDE SEQUENCE [LARGE SCALE MRNA]</scope>
    <source>
        <tissue>Prostate</tissue>
    </source>
</reference>
<reference key="2">
    <citation type="journal article" date="1989" name="Mol. Cell. Biol.">
        <title>A novel member of the thyroid/steroid hormone receptor family is encoded by the opposite strand of the rat c-erbA alpha transcriptional unit.</title>
        <authorList>
            <person name="Lazar M.A."/>
            <person name="Hodin R.A."/>
            <person name="Darling D.S."/>
            <person name="Chin W.W."/>
        </authorList>
    </citation>
    <scope>NUCLEOTIDE SEQUENCE [MRNA] OF 11-615</scope>
</reference>
<reference key="3">
    <citation type="journal article" date="2011" name="Nat. Neurosci.">
        <title>A circadian clock in hippocampus is regulated by interaction between oligophrenin-1 and Rev-erbalpha.</title>
        <authorList>
            <person name="Valnegri P."/>
            <person name="Khelfaoui M."/>
            <person name="Dorseuil O."/>
            <person name="Bassani S."/>
            <person name="Lagneaux C."/>
            <person name="Gianfelice A."/>
            <person name="Benfante R."/>
            <person name="Chelly J."/>
            <person name="Billuart P."/>
            <person name="Sala C."/>
            <person name="Passafaro M."/>
        </authorList>
    </citation>
    <scope>INTERACTION WITH OPHN1</scope>
</reference>
<reference key="4">
    <citation type="journal article" date="2012" name="Biochem. Biophys. Res. Commun.">
        <title>Rev-erbalpha regulates circadian rhythms and StAR expression in rat granulosa cells as identified by the agonist GSK4112.</title>
        <authorList>
            <person name="Chen H."/>
            <person name="Chu G."/>
            <person name="Zhao L."/>
            <person name="Yamauchi N."/>
            <person name="Shigeyoshi Y."/>
            <person name="Hashimoto S."/>
            <person name="Hattori M.A."/>
        </authorList>
    </citation>
    <scope>FUNCTION</scope>
</reference>
<reference key="5">
    <citation type="journal article" date="2012" name="Nat. Commun.">
        <title>Involvement of urinary bladder Connexin43 and the circadian clock in coordination of diurnal micturition rhythm.</title>
        <authorList>
            <person name="Negoro H."/>
            <person name="Kanematsu A."/>
            <person name="Doi M."/>
            <person name="Suadicani S.O."/>
            <person name="Matsuo M."/>
            <person name="Imamura M."/>
            <person name="Okinami T."/>
            <person name="Nishikawa N."/>
            <person name="Oura T."/>
            <person name="Matsui S."/>
            <person name="Seo K."/>
            <person name="Tainaka M."/>
            <person name="Urabe S."/>
            <person name="Kiyokage E."/>
            <person name="Todo T."/>
            <person name="Okamura H."/>
            <person name="Tabata Y."/>
            <person name="Ogawa O."/>
        </authorList>
    </citation>
    <scope>INDUCTION</scope>
</reference>
<reference key="6">
    <citation type="journal article" date="2012" name="Nat. Commun.">
        <title>Quantitative maps of protein phosphorylation sites across 14 different rat organs and tissues.</title>
        <authorList>
            <person name="Lundby A."/>
            <person name="Secher A."/>
            <person name="Lage K."/>
            <person name="Nordsborg N.B."/>
            <person name="Dmytriyev A."/>
            <person name="Lundby C."/>
            <person name="Olsen J.V."/>
        </authorList>
    </citation>
    <scope>IDENTIFICATION BY MASS SPECTROMETRY [LARGE SCALE ANALYSIS]</scope>
</reference>
<accession>Q63503</accession>
<accession>Q6P6S7</accession>
<feature type="chain" id="PRO_0000053500" description="Nuclear receptor subfamily 1 group D member 1">
    <location>
        <begin position="1"/>
        <end position="615"/>
    </location>
</feature>
<feature type="domain" description="NR LBD" evidence="5">
    <location>
        <begin position="285"/>
        <end position="615"/>
    </location>
</feature>
<feature type="DNA-binding region" description="Nuclear receptor" evidence="4">
    <location>
        <begin position="130"/>
        <end position="206"/>
    </location>
</feature>
<feature type="zinc finger region" description="NR C4-type" evidence="4">
    <location>
        <begin position="133"/>
        <end position="153"/>
    </location>
</feature>
<feature type="zinc finger region" description="NR C4-type" evidence="4">
    <location>
        <begin position="170"/>
        <end position="194"/>
    </location>
</feature>
<feature type="region of interest" description="Modulating">
    <location>
        <begin position="1"/>
        <end position="129"/>
    </location>
</feature>
<feature type="region of interest" description="Disordered" evidence="6">
    <location>
        <begin position="1"/>
        <end position="120"/>
    </location>
</feature>
<feature type="region of interest" description="Required for phosphorylation by CSNK1E and cytoplasmic localization" evidence="3">
    <location>
        <begin position="1"/>
        <end position="70"/>
    </location>
</feature>
<feature type="region of interest" description="Crucial for activation of GJA1" evidence="1">
    <location>
        <begin position="49"/>
        <end position="285"/>
    </location>
</feature>
<feature type="region of interest" description="Disordered" evidence="6">
    <location>
        <begin position="235"/>
        <end position="287"/>
    </location>
</feature>
<feature type="region of interest" description="Disordered" evidence="6">
    <location>
        <begin position="312"/>
        <end position="337"/>
    </location>
</feature>
<feature type="region of interest" description="Disordered" evidence="6">
    <location>
        <begin position="357"/>
        <end position="385"/>
    </location>
</feature>
<feature type="compositionally biased region" description="Polar residues" evidence="6">
    <location>
        <begin position="1"/>
        <end position="12"/>
    </location>
</feature>
<feature type="compositionally biased region" description="Low complexity" evidence="6">
    <location>
        <begin position="14"/>
        <end position="34"/>
    </location>
</feature>
<feature type="compositionally biased region" description="Polar residues" evidence="6">
    <location>
        <begin position="35"/>
        <end position="48"/>
    </location>
</feature>
<feature type="compositionally biased region" description="Low complexity" evidence="6">
    <location>
        <begin position="72"/>
        <end position="103"/>
    </location>
</feature>
<feature type="compositionally biased region" description="Pro residues" evidence="6">
    <location>
        <begin position="253"/>
        <end position="262"/>
    </location>
</feature>
<feature type="binding site" evidence="1">
    <location>
        <position position="419"/>
    </location>
    <ligand>
        <name>heme</name>
        <dbReference type="ChEBI" id="CHEBI:30413"/>
    </ligand>
</feature>
<feature type="binding site" evidence="1">
    <location>
        <position position="603"/>
    </location>
    <ligand>
        <name>heme</name>
        <dbReference type="ChEBI" id="CHEBI:30413"/>
    </ligand>
</feature>
<feature type="modified residue" description="Phosphoserine; by GSK3-beta" evidence="2">
    <location>
        <position position="55"/>
    </location>
</feature>
<feature type="modified residue" description="Phosphoserine; by GSK3-beta" evidence="2">
    <location>
        <position position="59"/>
    </location>
</feature>
<feature type="modified residue" description="N6-acetyllysine; by KAT5" evidence="1">
    <location>
        <position position="192"/>
    </location>
</feature>
<feature type="modified residue" description="N6-acetyllysine; by KAT5" evidence="1">
    <location>
        <position position="193"/>
    </location>
</feature>
<feature type="modified residue" description="Phosphothreonine; by CDK1" evidence="3">
    <location>
        <position position="275"/>
    </location>
</feature>
<feature type="modified residue" description="N6-acetyllysine" evidence="2">
    <location>
        <position position="401"/>
    </location>
</feature>
<feature type="modified residue" description="N6-acetyllysine" evidence="2">
    <location>
        <position position="592"/>
    </location>
</feature>
<feature type="sequence conflict" description="In Ref. 2; AAA74939." evidence="10" ref="2">
    <original>H</original>
    <variation>Q</variation>
    <location>
        <position position="457"/>
    </location>
</feature>
<feature type="sequence conflict" description="In Ref. 2; AAA74939." evidence="10" ref="2">
    <original>DR</original>
    <variation>EG</variation>
    <location>
        <begin position="550"/>
        <end position="551"/>
    </location>
</feature>
<feature type="sequence conflict" description="In Ref. 2; AAA74939." evidence="10" ref="2">
    <original>K</original>
    <variation>E</variation>
    <location>
        <position position="565"/>
    </location>
</feature>
<feature type="sequence conflict" description="In Ref. 2; AAA74939." evidence="10" ref="2">
    <original>R</original>
    <variation>G</variation>
    <location>
        <position position="569"/>
    </location>
</feature>